<comment type="function">
    <text evidence="4 5">Transports 4-hydroxybenzoate (4-HBA) and protocatechuate across the membrane. Driven by the proton motive force. Also functions as a chemoreceptor, which is required for chemotaxis to aromatic acids.</text>
</comment>
<comment type="biophysicochemical properties">
    <kinetics>
        <KM evidence="5">6 uM for 4-hydroxybenzoate</KM>
        <Vmax evidence="5">25.0 nmol/min/mg enzyme with 4-hydroxybenzoate as substrate</Vmax>
    </kinetics>
</comment>
<comment type="subcellular location">
    <subcellularLocation>
        <location evidence="2 5">Cell inner membrane</location>
        <topology evidence="2 5">Multi-pass membrane protein</topology>
    </subcellularLocation>
</comment>
<comment type="domain">
    <text evidence="2">Amino acids located between the second and third, and the eighth and ninth transmembrane regions are required for substrate transport.</text>
</comment>
<comment type="similarity">
    <text evidence="6">Belongs to the major facilitator superfamily. Aromatic acid:H(+) symporter (AAHS) (TC 2.A.1.15) family.</text>
</comment>
<sequence>MNQAQNSVGKSLDVQSFINQQPLSRYQWRVVLLCFLIVFLDGLDTAAMGFIAPALSQEWGIDRASLGPVMSAALIGMVFGALGSGPLADRFGRKGVLVGAVLVFGGFSLASAYATNVDQLLVLRFLTGLGLGAGMPNATTLLSEYTPERLKSLLVTSMFCGFNLGMAGGGFISAKMIPAYGWHSLLVIGGVLPLLLALVLMVWLPESARFLVVRNRGTDKIRKTLSPIAPQVVAEAGSFSVPEQKAVAARSVFAVIFSGTYGLGTMLLWLTYFMGLVIVYLLTSWLPTLMRDSGASMEQAAFIGALFQFGGVLSAVGVGWAMDRYNPHKVIGIFYLLAGVFAYAVGQSLGNITVLATLVLIAGMCVNGAQSAMPSLAARFYPTQGRATGVSWMLGIGRFGAILGAWSGATLLGLGWNFEQVLTALLVPAALATVGVIVKGLVSHADAT</sequence>
<accession>Q51955</accession>
<name>PCAK_PSEPU</name>
<feature type="chain" id="PRO_0000050321" description="4-hydroxybenzoate transporter PcaK">
    <location>
        <begin position="1"/>
        <end position="448"/>
    </location>
</feature>
<feature type="topological domain" description="Cytoplasmic" evidence="1">
    <location>
        <begin position="1"/>
        <end position="30"/>
    </location>
</feature>
<feature type="transmembrane region" description="Helical; Name=1" evidence="1">
    <location>
        <begin position="31"/>
        <end position="51"/>
    </location>
</feature>
<feature type="topological domain" description="Periplasmic" evidence="1">
    <location>
        <begin position="52"/>
        <end position="67"/>
    </location>
</feature>
<feature type="transmembrane region" description="Helical; Name=2" evidence="1">
    <location>
        <begin position="68"/>
        <end position="88"/>
    </location>
</feature>
<feature type="topological domain" description="Cytoplasmic" evidence="1">
    <location>
        <begin position="89"/>
        <end position="94"/>
    </location>
</feature>
<feature type="transmembrane region" description="Helical; Name=3" evidence="1">
    <location>
        <begin position="95"/>
        <end position="115"/>
    </location>
</feature>
<feature type="topological domain" description="Periplasmic" evidence="1">
    <location>
        <begin position="116"/>
        <end position="119"/>
    </location>
</feature>
<feature type="transmembrane region" description="Helical; Name=4" evidence="1">
    <location>
        <begin position="120"/>
        <end position="140"/>
    </location>
</feature>
<feature type="topological domain" description="Cytoplasmic" evidence="1">
    <location>
        <begin position="141"/>
        <end position="152"/>
    </location>
</feature>
<feature type="transmembrane region" description="Helical; Name=5" evidence="1">
    <location>
        <begin position="153"/>
        <end position="173"/>
    </location>
</feature>
<feature type="topological domain" description="Periplasmic" evidence="1">
    <location>
        <begin position="174"/>
        <end position="184"/>
    </location>
</feature>
<feature type="transmembrane region" description="Helical; Name=6" evidence="1">
    <location>
        <begin position="185"/>
        <end position="205"/>
    </location>
</feature>
<feature type="topological domain" description="Cytoplasmic" evidence="1">
    <location>
        <begin position="206"/>
        <end position="261"/>
    </location>
</feature>
<feature type="transmembrane region" description="Helical; Name=7" evidence="1">
    <location>
        <begin position="262"/>
        <end position="282"/>
    </location>
</feature>
<feature type="topological domain" description="Periplasmic" evidence="1">
    <location>
        <begin position="283"/>
        <end position="301"/>
    </location>
</feature>
<feature type="transmembrane region" description="Helical; Name=8" evidence="1">
    <location>
        <begin position="302"/>
        <end position="322"/>
    </location>
</feature>
<feature type="topological domain" description="Cytoplasmic" evidence="1">
    <location>
        <begin position="323"/>
        <end position="329"/>
    </location>
</feature>
<feature type="transmembrane region" description="Helical; Name=9" evidence="1">
    <location>
        <begin position="330"/>
        <end position="350"/>
    </location>
</feature>
<feature type="topological domain" description="Periplasmic" evidence="1">
    <location>
        <position position="351"/>
    </location>
</feature>
<feature type="transmembrane region" description="Helical; Name=10" evidence="1">
    <location>
        <begin position="352"/>
        <end position="372"/>
    </location>
</feature>
<feature type="topological domain" description="Cytoplasmic" evidence="1">
    <location>
        <begin position="373"/>
        <end position="398"/>
    </location>
</feature>
<feature type="transmembrane region" description="Helical; Name=11" evidence="1">
    <location>
        <begin position="399"/>
        <end position="419"/>
    </location>
</feature>
<feature type="topological domain" description="Periplasmic" evidence="1">
    <location>
        <begin position="420"/>
        <end position="421"/>
    </location>
</feature>
<feature type="transmembrane region" description="Helical; Name=12" evidence="1">
    <location>
        <begin position="422"/>
        <end position="442"/>
    </location>
</feature>
<feature type="topological domain" description="Cytoplasmic" evidence="1">
    <location>
        <begin position="443"/>
        <end position="448"/>
    </location>
</feature>
<feature type="mutagenesis site" description="Abolishes 4-HBA transport." evidence="3">
    <original>D</original>
    <variation>A</variation>
    <variation>N</variation>
    <location>
        <position position="41"/>
    </location>
</feature>
<feature type="mutagenesis site" description="Decrease in 4-HBA transport." evidence="3">
    <original>D</original>
    <variation>E</variation>
    <location>
        <position position="41"/>
    </location>
</feature>
<feature type="mutagenesis site" description="Abolishes 4-HBA transport." evidence="3">
    <original>D</original>
    <variation>A</variation>
    <variation>N</variation>
    <location>
        <position position="44"/>
    </location>
</feature>
<feature type="mutagenesis site" description="Decrease in 4-HBA transport." evidence="3">
    <original>D</original>
    <variation>E</variation>
    <location>
        <position position="44"/>
    </location>
</feature>
<feature type="mutagenesis site" description="Abolishes 4-HBA transport and chemotaxis." evidence="2">
    <original>G</original>
    <variation>V</variation>
    <location>
        <position position="85"/>
    </location>
</feature>
<feature type="mutagenesis site" description="Abolishes 4-HBA transport and chemotaxis." evidence="2">
    <original>D</original>
    <variation>N</variation>
    <location>
        <position position="89"/>
    </location>
</feature>
<feature type="mutagenesis site" description="Decrease in 4-HBA transport and chemotaxis." evidence="2">
    <original>G</original>
    <variation>A</variation>
    <location>
        <position position="92"/>
    </location>
</feature>
<feature type="mutagenesis site" description="No change in 4-HBA transport and chemotaxis." evidence="2">
    <original>G</original>
    <variation>C</variation>
    <location>
        <position position="92"/>
    </location>
</feature>
<feature type="mutagenesis site" description="Abolishes 4-HBA transport and chemotaxis." evidence="2">
    <original>G</original>
    <variation>L</variation>
    <variation>V</variation>
    <location>
        <position position="92"/>
    </location>
</feature>
<feature type="mutagenesis site" description="Decrease in 4-HBA transport and strong decrease in chemotaxis." evidence="2">
    <original>G</original>
    <variation>Q</variation>
    <location>
        <position position="92"/>
    </location>
</feature>
<feature type="mutagenesis site" description="Abolishes 4-HBA transport." evidence="3">
    <original>R</original>
    <variation>A</variation>
    <location>
        <position position="124"/>
    </location>
</feature>
<feature type="mutagenesis site" description="Strong decrease in 4-HBA transport." evidence="3">
    <original>E</original>
    <variation>A</variation>
    <location>
        <position position="144"/>
    </location>
</feature>
<feature type="mutagenesis site" description="Decrease in 4-HBA transport and chemotaxis." evidence="3">
    <original>H</original>
    <variation>A</variation>
    <location>
        <position position="183"/>
    </location>
</feature>
<feature type="mutagenesis site" description="Abolishes 4-HBA transport and chemotaxis." evidence="2">
    <original>D</original>
    <variation>N</variation>
    <location>
        <position position="323"/>
    </location>
</feature>
<feature type="mutagenesis site" description="Decrease in 4-HBA transport and chemotaxis." evidence="3">
    <original>H</original>
    <variation>A</variation>
    <location>
        <position position="328"/>
    </location>
</feature>
<feature type="mutagenesis site" description="Decrease in 4-HBA transport and loss of chemotaxis." evidence="3">
    <original>H</original>
    <variation>R</variation>
    <location>
        <position position="328"/>
    </location>
</feature>
<feature type="mutagenesis site" description="Strong decrease in 4-HBA transport." evidence="3">
    <original>R</original>
    <variation>A</variation>
    <location>
        <position position="386"/>
    </location>
</feature>
<feature type="mutagenesis site" description="Abolishes 4-HBA transport." evidence="3">
    <original>R</original>
    <variation>A</variation>
    <location>
        <position position="398"/>
    </location>
</feature>
<feature type="mutagenesis site" description="No change in 4-HBA transport and chemotaxis." evidence="3">
    <original>H</original>
    <variation>A</variation>
    <location>
        <position position="444"/>
    </location>
</feature>
<proteinExistence type="evidence at protein level"/>
<reference key="1">
    <citation type="journal article" date="1994" name="J. Bacteriol.">
        <title>Identification of the pcaRKF gene cluster from Pseudomonas putida: involvement in chemotaxis, biodegradation, and transport of 4-hydroxybenzoate.</title>
        <authorList>
            <person name="Harwood C.S."/>
            <person name="Nichols N.N."/>
            <person name="Kim M.-K."/>
            <person name="Ditty J.L."/>
            <person name="Parales R.E."/>
        </authorList>
    </citation>
    <scope>NUCLEOTIDE SEQUENCE [GENOMIC DNA]</scope>
    <scope>FUNCTION</scope>
    <source>
        <strain>PRS2000</strain>
    </source>
</reference>
<reference key="2">
    <citation type="journal article" date="1997" name="J. Bacteriol.">
        <title>PcaK, a high-affinity permease for the aromatic compounds 4-hydroxybenzoate and protocatechuate from Pseudomonas putida.</title>
        <authorList>
            <person name="Nichols N.N."/>
            <person name="Harwood C.S."/>
        </authorList>
    </citation>
    <scope>FUNCTION</scope>
    <scope>BIOPHYSICOCHEMICAL PROPERTIES</scope>
    <scope>SUBCELLULAR LOCATION</scope>
    <source>
        <strain>PRS2000</strain>
    </source>
</reference>
<reference key="3">
    <citation type="journal article" date="1999" name="J. Bacteriol.">
        <title>Conserved cytoplasmic loops are important for both the transport and chemotaxis functions of PcaK, a protein from Pseudomonas putida with 12 membrane-spanning regions.</title>
        <authorList>
            <person name="Ditty J.L."/>
            <person name="Harwood C.S."/>
        </authorList>
    </citation>
    <scope>SUBCELLULAR LOCATION</scope>
    <scope>DOMAIN</scope>
    <scope>MUTAGENESIS OF GLY-85; ASP-89; GLY-92 AND ASP-323</scope>
    <source>
        <strain>PRS2000</strain>
    </source>
</reference>
<reference key="4">
    <citation type="journal article" date="2002" name="J. Bacteriol.">
        <title>Charged amino acids conserved in the aromatic acid/H+ symporter family of permeases are required for 4-hydroxybenzoate transport by PcaK from Pseudomonas putida.</title>
        <authorList>
            <person name="Ditty J.L."/>
            <person name="Harwood C.S."/>
        </authorList>
    </citation>
    <scope>MUTAGENESIS OF ASP-41; ASP-44; ARG-124; GLU-144; HIS-183; HIS-328; ARG-386; ARG-398 AND HIS-444</scope>
</reference>
<protein>
    <recommendedName>
        <fullName>4-hydroxybenzoate transporter PcaK</fullName>
    </recommendedName>
</protein>
<organism>
    <name type="scientific">Pseudomonas putida</name>
    <name type="common">Arthrobacter siderocapsulatus</name>
    <dbReference type="NCBI Taxonomy" id="303"/>
    <lineage>
        <taxon>Bacteria</taxon>
        <taxon>Pseudomonadati</taxon>
        <taxon>Pseudomonadota</taxon>
        <taxon>Gammaproteobacteria</taxon>
        <taxon>Pseudomonadales</taxon>
        <taxon>Pseudomonadaceae</taxon>
        <taxon>Pseudomonas</taxon>
    </lineage>
</organism>
<evidence type="ECO:0000255" key="1"/>
<evidence type="ECO:0000269" key="2">
    <source>
    </source>
</evidence>
<evidence type="ECO:0000269" key="3">
    <source>
    </source>
</evidence>
<evidence type="ECO:0000269" key="4">
    <source>
    </source>
</evidence>
<evidence type="ECO:0000269" key="5">
    <source>
    </source>
</evidence>
<evidence type="ECO:0000305" key="6"/>
<keyword id="KW-0997">Cell inner membrane</keyword>
<keyword id="KW-1003">Cell membrane</keyword>
<keyword id="KW-0145">Chemotaxis</keyword>
<keyword id="KW-0472">Membrane</keyword>
<keyword id="KW-0812">Transmembrane</keyword>
<keyword id="KW-1133">Transmembrane helix</keyword>
<keyword id="KW-0813">Transport</keyword>
<gene>
    <name type="primary">pcaK</name>
</gene>
<dbReference type="EMBL" id="U10895">
    <property type="protein sequence ID" value="AAA85137.1"/>
    <property type="molecule type" value="Genomic_DNA"/>
</dbReference>
<dbReference type="RefSeq" id="WP_016498119.1">
    <property type="nucleotide sequence ID" value="NZ_UGUX01000003.1"/>
</dbReference>
<dbReference type="SMR" id="Q51955"/>
<dbReference type="TCDB" id="2.A.1.15.1">
    <property type="family name" value="the major facilitator superfamily (mfs)"/>
</dbReference>
<dbReference type="eggNOG" id="COG2814">
    <property type="taxonomic scope" value="Bacteria"/>
</dbReference>
<dbReference type="OrthoDB" id="7066727at2"/>
<dbReference type="GO" id="GO:0005886">
    <property type="term" value="C:plasma membrane"/>
    <property type="evidence" value="ECO:0007669"/>
    <property type="project" value="UniProtKB-SubCell"/>
</dbReference>
<dbReference type="GO" id="GO:0046943">
    <property type="term" value="F:carboxylic acid transmembrane transporter activity"/>
    <property type="evidence" value="ECO:0007669"/>
    <property type="project" value="TreeGrafter"/>
</dbReference>
<dbReference type="GO" id="GO:0006935">
    <property type="term" value="P:chemotaxis"/>
    <property type="evidence" value="ECO:0007669"/>
    <property type="project" value="UniProtKB-KW"/>
</dbReference>
<dbReference type="CDD" id="cd17365">
    <property type="entry name" value="MFS_PcaK_like"/>
    <property type="match status" value="1"/>
</dbReference>
<dbReference type="Gene3D" id="1.20.1250.20">
    <property type="entry name" value="MFS general substrate transporter like domains"/>
    <property type="match status" value="2"/>
</dbReference>
<dbReference type="InterPro" id="IPR011701">
    <property type="entry name" value="MFS"/>
</dbReference>
<dbReference type="InterPro" id="IPR004746">
    <property type="entry name" value="MFS_AAHS"/>
</dbReference>
<dbReference type="InterPro" id="IPR020846">
    <property type="entry name" value="MFS_dom"/>
</dbReference>
<dbReference type="InterPro" id="IPR036259">
    <property type="entry name" value="MFS_trans_sf"/>
</dbReference>
<dbReference type="InterPro" id="IPR005829">
    <property type="entry name" value="Sugar_transporter_CS"/>
</dbReference>
<dbReference type="NCBIfam" id="TIGR00895">
    <property type="entry name" value="2A0115"/>
    <property type="match status" value="1"/>
</dbReference>
<dbReference type="PANTHER" id="PTHR23508">
    <property type="entry name" value="CARBOXYLIC ACID TRANSPORTER PROTEIN HOMOLOG"/>
    <property type="match status" value="1"/>
</dbReference>
<dbReference type="PANTHER" id="PTHR23508:SF10">
    <property type="entry name" value="CARBOXYLIC ACID TRANSPORTER PROTEIN HOMOLOG"/>
    <property type="match status" value="1"/>
</dbReference>
<dbReference type="Pfam" id="PF07690">
    <property type="entry name" value="MFS_1"/>
    <property type="match status" value="1"/>
</dbReference>
<dbReference type="SUPFAM" id="SSF103473">
    <property type="entry name" value="MFS general substrate transporter"/>
    <property type="match status" value="1"/>
</dbReference>
<dbReference type="PROSITE" id="PS50850">
    <property type="entry name" value="MFS"/>
    <property type="match status" value="1"/>
</dbReference>